<reference key="1">
    <citation type="journal article" date="2011" name="J. Bacteriol.">
        <title>Comparative genomics of 28 Salmonella enterica isolates: evidence for CRISPR-mediated adaptive sublineage evolution.</title>
        <authorList>
            <person name="Fricke W.F."/>
            <person name="Mammel M.K."/>
            <person name="McDermott P.F."/>
            <person name="Tartera C."/>
            <person name="White D.G."/>
            <person name="Leclerc J.E."/>
            <person name="Ravel J."/>
            <person name="Cebula T.A."/>
        </authorList>
    </citation>
    <scope>NUCLEOTIDE SEQUENCE [LARGE SCALE GENOMIC DNA]</scope>
    <source>
        <strain>CVM19633</strain>
    </source>
</reference>
<protein>
    <recommendedName>
        <fullName evidence="1">PF03932 family protein CutC</fullName>
    </recommendedName>
</protein>
<dbReference type="EMBL" id="CP001127">
    <property type="protein sequence ID" value="ACF90258.1"/>
    <property type="molecule type" value="Genomic_DNA"/>
</dbReference>
<dbReference type="RefSeq" id="WP_001185781.1">
    <property type="nucleotide sequence ID" value="NC_011094.1"/>
</dbReference>
<dbReference type="SMR" id="B4TYT0"/>
<dbReference type="KEGG" id="sew:SeSA_A2061"/>
<dbReference type="HOGENOM" id="CLU_050555_3_2_6"/>
<dbReference type="Proteomes" id="UP000001865">
    <property type="component" value="Chromosome"/>
</dbReference>
<dbReference type="GO" id="GO:0005737">
    <property type="term" value="C:cytoplasm"/>
    <property type="evidence" value="ECO:0007669"/>
    <property type="project" value="UniProtKB-SubCell"/>
</dbReference>
<dbReference type="GO" id="GO:0005507">
    <property type="term" value="F:copper ion binding"/>
    <property type="evidence" value="ECO:0007669"/>
    <property type="project" value="TreeGrafter"/>
</dbReference>
<dbReference type="FunFam" id="3.20.20.380:FF:000001">
    <property type="entry name" value="Copper homeostasis protein CutC"/>
    <property type="match status" value="1"/>
</dbReference>
<dbReference type="Gene3D" id="3.20.20.380">
    <property type="entry name" value="Copper homeostasis (CutC) domain"/>
    <property type="match status" value="1"/>
</dbReference>
<dbReference type="HAMAP" id="MF_00795">
    <property type="entry name" value="CutC"/>
    <property type="match status" value="1"/>
</dbReference>
<dbReference type="InterPro" id="IPR005627">
    <property type="entry name" value="CutC-like"/>
</dbReference>
<dbReference type="InterPro" id="IPR036822">
    <property type="entry name" value="CutC-like_dom_sf"/>
</dbReference>
<dbReference type="NCBIfam" id="NF008603">
    <property type="entry name" value="PRK11572.1"/>
    <property type="match status" value="1"/>
</dbReference>
<dbReference type="PANTHER" id="PTHR12598">
    <property type="entry name" value="COPPER HOMEOSTASIS PROTEIN CUTC"/>
    <property type="match status" value="1"/>
</dbReference>
<dbReference type="PANTHER" id="PTHR12598:SF0">
    <property type="entry name" value="COPPER HOMEOSTASIS PROTEIN CUTC HOMOLOG"/>
    <property type="match status" value="1"/>
</dbReference>
<dbReference type="Pfam" id="PF03932">
    <property type="entry name" value="CutC"/>
    <property type="match status" value="1"/>
</dbReference>
<dbReference type="SUPFAM" id="SSF110395">
    <property type="entry name" value="CutC-like"/>
    <property type="match status" value="1"/>
</dbReference>
<proteinExistence type="inferred from homology"/>
<comment type="subunit">
    <text evidence="1">Homodimer.</text>
</comment>
<comment type="subcellular location">
    <subcellularLocation>
        <location evidence="1">Cytoplasm</location>
    </subcellularLocation>
</comment>
<comment type="similarity">
    <text evidence="1">Belongs to the CutC family.</text>
</comment>
<comment type="caution">
    <text evidence="1">Once thought to be involved in copper homeostasis, experiments in E.coli have shown this is not the case.</text>
</comment>
<keyword id="KW-0963">Cytoplasm</keyword>
<accession>B4TYT0</accession>
<organism>
    <name type="scientific">Salmonella schwarzengrund (strain CVM19633)</name>
    <dbReference type="NCBI Taxonomy" id="439843"/>
    <lineage>
        <taxon>Bacteria</taxon>
        <taxon>Pseudomonadati</taxon>
        <taxon>Pseudomonadota</taxon>
        <taxon>Gammaproteobacteria</taxon>
        <taxon>Enterobacterales</taxon>
        <taxon>Enterobacteriaceae</taxon>
        <taxon>Salmonella</taxon>
    </lineage>
</organism>
<gene>
    <name evidence="1" type="primary">cutC</name>
    <name type="ordered locus">SeSA_A2061</name>
</gene>
<evidence type="ECO:0000255" key="1">
    <source>
        <dbReference type="HAMAP-Rule" id="MF_00795"/>
    </source>
</evidence>
<sequence>MALLEICCYSMECALTAQRNGADRIELCAAPKEGGLTPSLGVLRSVREHITIPVHPIIRPRGGDFYYTDGEFAAMLEDIRLVRELGFPGLVTGVLTVDGDVDMSRMEKIMAAAGPLAVTFHRAFDMCANPFNALKNLADAGVSRVLTSGQKADAAQGLSIIMELIAQGDAPIIMAGAGVRANNLQNFLDAGVREVHSSAGVLLPSPMRYRNQGLSMSADIQADEYSRYRVEGAAVAEMKGIIVRHQAK</sequence>
<feature type="chain" id="PRO_1000133849" description="PF03932 family protein CutC">
    <location>
        <begin position="1"/>
        <end position="248"/>
    </location>
</feature>
<name>CUTC_SALSV</name>